<proteinExistence type="evidence at protein level"/>
<reference key="1">
    <citation type="journal article" date="2015" name="Genome Announc.">
        <title>Complete Genome Sequence of Sulfolobus solfataricus Strain 98/2 and Evolved Derivatives.</title>
        <authorList>
            <person name="McCarthy S."/>
            <person name="Gradnigo J."/>
            <person name="Johnson T."/>
            <person name="Payne S."/>
            <person name="Lipzen A."/>
            <person name="Martin J."/>
            <person name="Schackwitz W."/>
            <person name="Moriyama E."/>
            <person name="Blum P."/>
        </authorList>
    </citation>
    <scope>NUCLEOTIDE SEQUENCE [LARGE SCALE GENOMIC DNA]</scope>
    <source>
        <strain evidence="7 10">98/2 SULC</strain>
        <strain evidence="8 12">SULA</strain>
        <strain evidence="6 11">SULB</strain>
    </source>
</reference>
<reference key="2">
    <citation type="submission" date="2016-04" db="EMBL/GenBank/DDBJ databases">
        <authorList>
            <person name="Shah S.A."/>
            <person name="Garrett R.A."/>
        </authorList>
    </citation>
    <scope>NUCLEOTIDE SEQUENCE [LARGE SCALE GENOMIC DNA]</scope>
    <source>
        <strain evidence="9">ATCC 35091 / DSM 1616 / JCM 8930 / NBRC 15331 / P1</strain>
    </source>
</reference>
<reference key="3">
    <citation type="journal article" date="2006" name="J. Biochem. Mol. Biol.">
        <title>Purifications and characterizations of a ferredoxin and its related 2-oxoacid:ferredoxin oxidoreductase from the hyperthermophilic archaeon, Sulfolobus solfataricus P1.</title>
        <authorList>
            <person name="Park Y.J."/>
            <person name="Yoo C.B."/>
            <person name="Choi S.Y."/>
            <person name="Lee H.B."/>
        </authorList>
    </citation>
    <scope>FUNCTION</scope>
    <scope>CATALYTIC ACTIVITY</scope>
    <scope>BIOPHYSICOCHEMICAL PROPERTIES</scope>
    <scope>MASS SPECTROMETRY</scope>
    <scope>SUBUNIT</scope>
    <scope>SUBSTRATE SPECIFICITY</scope>
    <source>
        <strain>ATCC 35091 / DSM 1616 / JCM 8930 / NBRC 15331 / P1</strain>
    </source>
</reference>
<sequence length="632" mass="70228">MRISWMIGGAQGSGVDTSANIFGNAVAASGYYIYGNREYYSNIKGRHSYFNLTISDKPPRSIAQQIEILTSFDAETIFQHFNEVKDVLIYSTEVENTKAEQVQSMEPEITEHVVKFLKEKGYGTTVKDVINYLKKEKGVKVIPIDYMEILKKVADQAKVQLSVADRARNTIAIAASYKLLGLKEQYLINSITRTFRQEVFAKINTIAAQLAMQQIQPMYNLPELPNNEEKINLDGNTAAAIGKIYGGLRFQSYYPITPASDESVFIEAHQTVFTVDPKTGEKRKSTIVVVQAEDELAAINMASGAALTGVRAATATSGPGFSLMVEGMGWAGMNEVPVVITYYIRGGPSTGQPTRTSQADLMFALNAGHGEFPRIVIASGDHVEAFHDGTWALNLAQKYQTPVIHLVDKALANSYSIIPKKTLGMENIRIEKGKIVINTNTPELKRFEITEDGISPFAPLGTARVHYTGDEHDEYGFIAEASENREKMYEKRIKKLMTADKEIPEESRVNVYGNTDSKVAIITWGSPKGAILDAMEELENEGIKPMLIQIRMFSPFPKNLMRKLLNGKEFIIDVESNYFGQAGEVLKLNTGIEPTHYILKWNGRPMMRDEVKEGIKAVVQKGERRVVLHGGA</sequence>
<accession>A0A0E3JT70</accession>
<keyword id="KW-0560">Oxidoreductase</keyword>
<keyword id="KW-0670">Pyruvate</keyword>
<evidence type="ECO:0000250" key="1">
    <source>
        <dbReference type="UniProtKB" id="P72578"/>
    </source>
</evidence>
<evidence type="ECO:0000250" key="2">
    <source>
        <dbReference type="UniProtKB" id="Q96XT2"/>
    </source>
</evidence>
<evidence type="ECO:0000269" key="3">
    <source>
    </source>
</evidence>
<evidence type="ECO:0000303" key="4">
    <source>
    </source>
</evidence>
<evidence type="ECO:0000305" key="5"/>
<evidence type="ECO:0000312" key="6">
    <source>
        <dbReference type="EMBL" id="AKA73017.1"/>
    </source>
</evidence>
<evidence type="ECO:0000312" key="7">
    <source>
        <dbReference type="EMBL" id="AKA75715.1"/>
    </source>
</evidence>
<evidence type="ECO:0000312" key="8">
    <source>
        <dbReference type="EMBL" id="AKA78407.1"/>
    </source>
</evidence>
<evidence type="ECO:0000312" key="9">
    <source>
        <dbReference type="EMBL" id="SAI86467.1"/>
    </source>
</evidence>
<evidence type="ECO:0000312" key="10">
    <source>
        <dbReference type="Proteomes" id="UP000033057"/>
    </source>
</evidence>
<evidence type="ECO:0000312" key="11">
    <source>
        <dbReference type="Proteomes" id="UP000033085"/>
    </source>
</evidence>
<evidence type="ECO:0000312" key="12">
    <source>
        <dbReference type="Proteomes" id="UP000033106"/>
    </source>
</evidence>
<gene>
    <name evidence="9" type="ORF">SSOP1_2913</name>
    <name evidence="8" type="ORF">SULA_0623</name>
    <name evidence="6" type="ORF">SULB_0625</name>
    <name evidence="7" type="ORF">SULC_0623</name>
</gene>
<name>OFOA_SACSO</name>
<organism>
    <name type="scientific">Saccharolobus solfataricus</name>
    <name type="common">Sulfolobus solfataricus</name>
    <dbReference type="NCBI Taxonomy" id="2287"/>
    <lineage>
        <taxon>Archaea</taxon>
        <taxon>Thermoproteota</taxon>
        <taxon>Thermoprotei</taxon>
        <taxon>Sulfolobales</taxon>
        <taxon>Sulfolobaceae</taxon>
        <taxon>Saccharolobus</taxon>
    </lineage>
</organism>
<protein>
    <recommendedName>
        <fullName evidence="4">2-oxoacid:ferredoxin oxidoreductase subunit alpha</fullName>
        <shortName evidence="5">OFOR</shortName>
        <ecNumber evidence="3">1.2.7.11</ecNumber>
    </recommendedName>
</protein>
<feature type="chain" id="PRO_0000445527" description="2-oxoacid:ferredoxin oxidoreductase subunit alpha">
    <location>
        <begin position="1"/>
        <end position="632"/>
    </location>
</feature>
<feature type="short sequence motif" description="YPITP motif" evidence="1">
    <location>
        <begin position="254"/>
        <end position="258"/>
    </location>
</feature>
<feature type="binding site" evidence="2">
    <location>
        <position position="257"/>
    </location>
    <ligand>
        <name>substrate</name>
    </ligand>
</feature>
<feature type="binding site" evidence="2">
    <location>
        <position position="345"/>
    </location>
    <ligand>
        <name>substrate</name>
    </ligand>
</feature>
<comment type="function">
    <text evidence="3">Catalyzes the coenzyme A-dependent oxidative decarboxylation of different 2-oxoacids such as 2-oxoglutarate, pyruvate and 2-oxobutyrate to form their CoA derivatives.</text>
</comment>
<comment type="catalytic activity">
    <reaction evidence="3">
        <text>a 2-oxocarboxylate + 2 oxidized [2Fe-2S]-[ferredoxin] + CoA = an acyl-CoA + 2 reduced [2Fe-2S]-[ferredoxin] + CO2 + H(+)</text>
        <dbReference type="Rhea" id="RHEA:42316"/>
        <dbReference type="Rhea" id="RHEA-COMP:10000"/>
        <dbReference type="Rhea" id="RHEA-COMP:10001"/>
        <dbReference type="ChEBI" id="CHEBI:15378"/>
        <dbReference type="ChEBI" id="CHEBI:16526"/>
        <dbReference type="ChEBI" id="CHEBI:33737"/>
        <dbReference type="ChEBI" id="CHEBI:33738"/>
        <dbReference type="ChEBI" id="CHEBI:35179"/>
        <dbReference type="ChEBI" id="CHEBI:57287"/>
        <dbReference type="ChEBI" id="CHEBI:58342"/>
        <dbReference type="EC" id="1.2.7.11"/>
    </reaction>
</comment>
<comment type="biophysicochemical properties">
    <kinetics>
        <KM evidence="3">163 uM for 2-oxoglutarate</KM>
        <KM evidence="3">275 uM for pyruvate</KM>
        <KM evidence="3">516 uM for 2-oxobutyrate</KM>
        <text>kcat is 452 min(-1) for 2-oxoglutarate as substrate. kcat is 144 min(-1) for pyruvate as substrate. kcat is 93 min(-1) for 2-oxobutyrate as substrate.</text>
    </kinetics>
    <phDependence>
        <text evidence="3">Optimum pH is between 7-8.</text>
    </phDependence>
    <temperatureDependence>
        <text evidence="3">Optimum temperature is 70 degrees Celsius.</text>
    </temperatureDependence>
</comment>
<comment type="subunit">
    <text evidence="3">Heterodimer composed of an alpha and a beta subunit.</text>
</comment>
<comment type="domain">
    <text evidence="1">The Tyr-Pro-Ile-Thr-Pro (YPITP) motif is important for the turnover of the reaction, presumably through its flexibility and mobility.</text>
</comment>
<comment type="mass spectrometry" mass="69300.0" method="MALDI" evidence="3"/>
<dbReference type="EC" id="1.2.7.11" evidence="3"/>
<dbReference type="EMBL" id="CP011055">
    <property type="protein sequence ID" value="AKA73017.1"/>
    <property type="molecule type" value="Genomic_DNA"/>
</dbReference>
<dbReference type="EMBL" id="CP011056">
    <property type="protein sequence ID" value="AKA75715.1"/>
    <property type="molecule type" value="Genomic_DNA"/>
</dbReference>
<dbReference type="EMBL" id="CP011057">
    <property type="protein sequence ID" value="AKA78407.1"/>
    <property type="molecule type" value="Genomic_DNA"/>
</dbReference>
<dbReference type="EMBL" id="LT549890">
    <property type="protein sequence ID" value="SAI86467.1"/>
    <property type="molecule type" value="Genomic_DNA"/>
</dbReference>
<dbReference type="RefSeq" id="WP_009989033.1">
    <property type="nucleotide sequence ID" value="NZ_LT549890.1"/>
</dbReference>
<dbReference type="SMR" id="A0A0E3JT70"/>
<dbReference type="KEGG" id="ssoa:SULA_0623"/>
<dbReference type="KEGG" id="ssof:SULC_0623"/>
<dbReference type="KEGG" id="ssol:SULB_0625"/>
<dbReference type="PATRIC" id="fig|2287.6.peg.649"/>
<dbReference type="OrthoDB" id="31112at2157"/>
<dbReference type="Proteomes" id="UP000033057">
    <property type="component" value="Chromosome"/>
</dbReference>
<dbReference type="Proteomes" id="UP000033085">
    <property type="component" value="Chromosome"/>
</dbReference>
<dbReference type="Proteomes" id="UP000033106">
    <property type="component" value="Chromosome"/>
</dbReference>
<dbReference type="Proteomes" id="UP000076770">
    <property type="component" value="Chromosome i"/>
</dbReference>
<dbReference type="GO" id="GO:0018491">
    <property type="term" value="F:2-oxobutyrate synthase activity"/>
    <property type="evidence" value="ECO:0000314"/>
    <property type="project" value="UniProtKB"/>
</dbReference>
<dbReference type="GO" id="GO:0047553">
    <property type="term" value="F:2-oxoglutarate synthase activity"/>
    <property type="evidence" value="ECO:0000314"/>
    <property type="project" value="UniProtKB"/>
</dbReference>
<dbReference type="GO" id="GO:0019164">
    <property type="term" value="F:pyruvate synthase activity"/>
    <property type="evidence" value="ECO:0000314"/>
    <property type="project" value="UniProtKB"/>
</dbReference>
<dbReference type="GO" id="GO:0006979">
    <property type="term" value="P:response to oxidative stress"/>
    <property type="evidence" value="ECO:0007669"/>
    <property type="project" value="TreeGrafter"/>
</dbReference>
<dbReference type="CDD" id="cd07034">
    <property type="entry name" value="TPP_PYR_PFOR_IOR-alpha_like"/>
    <property type="match status" value="1"/>
</dbReference>
<dbReference type="FunFam" id="3.40.50.970:FF:000022">
    <property type="entry name" value="2-oxoglutarate ferredoxin oxidoreductase alpha subunit"/>
    <property type="match status" value="1"/>
</dbReference>
<dbReference type="FunFam" id="3.40.50.920:FF:000009">
    <property type="entry name" value="2-oxoglutarate ferredoxin oxidoreductase subunit alpha"/>
    <property type="match status" value="1"/>
</dbReference>
<dbReference type="Gene3D" id="3.40.50.920">
    <property type="match status" value="1"/>
</dbReference>
<dbReference type="Gene3D" id="3.40.50.970">
    <property type="match status" value="1"/>
</dbReference>
<dbReference type="Gene3D" id="3.40.920.10">
    <property type="entry name" value="Pyruvate-ferredoxin oxidoreductase, PFOR, domain III"/>
    <property type="match status" value="1"/>
</dbReference>
<dbReference type="InterPro" id="IPR022367">
    <property type="entry name" value="2-oxoacid/accept_OxRdtase_asu"/>
</dbReference>
<dbReference type="InterPro" id="IPR053400">
    <property type="entry name" value="2-oxoacid_Fdx_oxidoreductase"/>
</dbReference>
<dbReference type="InterPro" id="IPR033412">
    <property type="entry name" value="PFOR_II"/>
</dbReference>
<dbReference type="InterPro" id="IPR050722">
    <property type="entry name" value="Pyruvate:ferred/Flavod_OxRd"/>
</dbReference>
<dbReference type="InterPro" id="IPR019752">
    <property type="entry name" value="Pyrv/ketoisovalerate_OxRed_cat"/>
</dbReference>
<dbReference type="InterPro" id="IPR002880">
    <property type="entry name" value="Pyrv_Fd/Flavodoxin_OxRdtase_N"/>
</dbReference>
<dbReference type="InterPro" id="IPR002869">
    <property type="entry name" value="Pyrv_flavodox_OxRed_cen"/>
</dbReference>
<dbReference type="InterPro" id="IPR029061">
    <property type="entry name" value="THDP-binding"/>
</dbReference>
<dbReference type="InterPro" id="IPR009014">
    <property type="entry name" value="Transketo_C/PFOR_II"/>
</dbReference>
<dbReference type="NCBIfam" id="TIGR03710">
    <property type="entry name" value="OAFO_sf"/>
    <property type="match status" value="1"/>
</dbReference>
<dbReference type="NCBIfam" id="NF041170">
    <property type="entry name" value="Oxoac_fdxalpha_Archa"/>
    <property type="match status" value="1"/>
</dbReference>
<dbReference type="PANTHER" id="PTHR32154:SF16">
    <property type="entry name" value="PYRUVATE FLAVODOXIN_FERREDOXIN OXIDOREDUCTASE DOMAIN PROTEIN"/>
    <property type="match status" value="1"/>
</dbReference>
<dbReference type="PANTHER" id="PTHR32154">
    <property type="entry name" value="PYRUVATE-FLAVODOXIN OXIDOREDUCTASE-RELATED"/>
    <property type="match status" value="1"/>
</dbReference>
<dbReference type="Pfam" id="PF17147">
    <property type="entry name" value="PFOR_II"/>
    <property type="match status" value="1"/>
</dbReference>
<dbReference type="Pfam" id="PF01558">
    <property type="entry name" value="POR"/>
    <property type="match status" value="1"/>
</dbReference>
<dbReference type="Pfam" id="PF01855">
    <property type="entry name" value="POR_N"/>
    <property type="match status" value="1"/>
</dbReference>
<dbReference type="SUPFAM" id="SSF53323">
    <property type="entry name" value="Pyruvate-ferredoxin oxidoreductase, PFOR, domain III"/>
    <property type="match status" value="1"/>
</dbReference>
<dbReference type="SUPFAM" id="SSF52518">
    <property type="entry name" value="Thiamin diphosphate-binding fold (THDP-binding)"/>
    <property type="match status" value="1"/>
</dbReference>
<dbReference type="SUPFAM" id="SSF52922">
    <property type="entry name" value="TK C-terminal domain-like"/>
    <property type="match status" value="1"/>
</dbReference>